<evidence type="ECO:0000255" key="1">
    <source>
        <dbReference type="HAMAP-Rule" id="MF_00422"/>
    </source>
</evidence>
<evidence type="ECO:0000269" key="2">
    <source>
    </source>
</evidence>
<gene>
    <name evidence="1" type="primary">secE</name>
    <name type="ordered locus">TM_0452</name>
</gene>
<organism>
    <name type="scientific">Thermotoga maritima (strain ATCC 43589 / DSM 3109 / JCM 10099 / NBRC 100826 / MSB8)</name>
    <dbReference type="NCBI Taxonomy" id="243274"/>
    <lineage>
        <taxon>Bacteria</taxon>
        <taxon>Thermotogati</taxon>
        <taxon>Thermotogota</taxon>
        <taxon>Thermotogae</taxon>
        <taxon>Thermotogales</taxon>
        <taxon>Thermotogaceae</taxon>
        <taxon>Thermotoga</taxon>
    </lineage>
</organism>
<comment type="function">
    <text>Essential subunit of the protein translocation channel SecYEG. Clamps together the 2 halves of SecY. May contact the channel plug during translocation.</text>
</comment>
<comment type="subunit">
    <text evidence="2">Component of the Sec protein translocase complex. Heterotrimer consisting of SecY, SecE and SecG subunits. The heterotrimers can form oligomers, although 1 heterotrimer is thought to be able to translocate proteins. Interacts with SecDF, and other proteins may be involved. The channel interacts with SecA via subunit SecY.</text>
</comment>
<comment type="subcellular location">
    <subcellularLocation>
        <location>Cell inner membrane</location>
        <topology>Single-pass membrane protein</topology>
    </subcellularLocation>
</comment>
<comment type="similarity">
    <text evidence="1">Belongs to the SecE/SEC61-gamma family.</text>
</comment>
<feature type="chain" id="PRO_0000104190" description="Protein translocase subunit SecE">
    <location>
        <begin position="1"/>
        <end position="65"/>
    </location>
</feature>
<feature type="topological domain" description="Cytoplasmic">
    <location>
        <begin position="1"/>
        <end position="34"/>
    </location>
</feature>
<feature type="transmembrane region" description="Helical">
    <location>
        <begin position="35"/>
        <end position="51"/>
    </location>
</feature>
<feature type="topological domain" description="Extracellular">
    <location>
        <begin position="52"/>
        <end position="65"/>
    </location>
</feature>
<dbReference type="EMBL" id="Z11839">
    <property type="protein sequence ID" value="CAA77865.1"/>
    <property type="molecule type" value="Genomic_DNA"/>
</dbReference>
<dbReference type="EMBL" id="AE000512">
    <property type="protein sequence ID" value="AAD35535.1"/>
    <property type="molecule type" value="Genomic_DNA"/>
</dbReference>
<dbReference type="PIR" id="E72375">
    <property type="entry name" value="E72375"/>
</dbReference>
<dbReference type="RefSeq" id="NP_228262.1">
    <property type="nucleotide sequence ID" value="NC_000853.1"/>
</dbReference>
<dbReference type="RefSeq" id="WP_004081514.1">
    <property type="nucleotide sequence ID" value="NZ_CP011107.1"/>
</dbReference>
<dbReference type="PDB" id="3DIN">
    <property type="method" value="X-ray"/>
    <property type="resolution" value="4.50 A"/>
    <property type="chains" value="D/G=1-65"/>
</dbReference>
<dbReference type="PDBsum" id="3DIN"/>
<dbReference type="SMR" id="P35874"/>
<dbReference type="DIP" id="DIP-59808N"/>
<dbReference type="IntAct" id="P35874">
    <property type="interactions" value="3"/>
</dbReference>
<dbReference type="STRING" id="243274.TM_0452"/>
<dbReference type="TCDB" id="3.A.5.1.4">
    <property type="family name" value="the general secretory pathway (sec) family"/>
</dbReference>
<dbReference type="PaxDb" id="243274-THEMA_02430"/>
<dbReference type="EnsemblBacteria" id="AAD35535">
    <property type="protein sequence ID" value="AAD35535"/>
    <property type="gene ID" value="TM_0452"/>
</dbReference>
<dbReference type="KEGG" id="tma:TM0452"/>
<dbReference type="KEGG" id="tmi:THEMA_02430"/>
<dbReference type="KEGG" id="tmm:Tmari_0449"/>
<dbReference type="KEGG" id="tmw:THMA_0462"/>
<dbReference type="eggNOG" id="COG0690">
    <property type="taxonomic scope" value="Bacteria"/>
</dbReference>
<dbReference type="InParanoid" id="P35874"/>
<dbReference type="OrthoDB" id="9813233at2"/>
<dbReference type="EvolutionaryTrace" id="P35874"/>
<dbReference type="Proteomes" id="UP000008183">
    <property type="component" value="Chromosome"/>
</dbReference>
<dbReference type="GO" id="GO:0005886">
    <property type="term" value="C:plasma membrane"/>
    <property type="evidence" value="ECO:0000318"/>
    <property type="project" value="GO_Central"/>
</dbReference>
<dbReference type="GO" id="GO:0008320">
    <property type="term" value="F:protein transmembrane transporter activity"/>
    <property type="evidence" value="ECO:0000318"/>
    <property type="project" value="GO_Central"/>
</dbReference>
<dbReference type="GO" id="GO:0065002">
    <property type="term" value="P:intracellular protein transmembrane transport"/>
    <property type="evidence" value="ECO:0007669"/>
    <property type="project" value="UniProtKB-UniRule"/>
</dbReference>
<dbReference type="GO" id="GO:0009306">
    <property type="term" value="P:protein secretion"/>
    <property type="evidence" value="ECO:0007669"/>
    <property type="project" value="UniProtKB-UniRule"/>
</dbReference>
<dbReference type="GO" id="GO:0006605">
    <property type="term" value="P:protein targeting"/>
    <property type="evidence" value="ECO:0007669"/>
    <property type="project" value="UniProtKB-UniRule"/>
</dbReference>
<dbReference type="GO" id="GO:0043952">
    <property type="term" value="P:protein transport by the Sec complex"/>
    <property type="evidence" value="ECO:0000318"/>
    <property type="project" value="GO_Central"/>
</dbReference>
<dbReference type="Gene3D" id="1.20.5.1030">
    <property type="entry name" value="Preprotein translocase secy subunit"/>
    <property type="match status" value="1"/>
</dbReference>
<dbReference type="HAMAP" id="MF_00422">
    <property type="entry name" value="SecE"/>
    <property type="match status" value="1"/>
</dbReference>
<dbReference type="InterPro" id="IPR005807">
    <property type="entry name" value="SecE_bac"/>
</dbReference>
<dbReference type="InterPro" id="IPR038379">
    <property type="entry name" value="SecE_sf"/>
</dbReference>
<dbReference type="InterPro" id="IPR001901">
    <property type="entry name" value="Translocase_SecE/Sec61-g"/>
</dbReference>
<dbReference type="NCBIfam" id="TIGR00964">
    <property type="entry name" value="secE_bact"/>
    <property type="match status" value="1"/>
</dbReference>
<dbReference type="PANTHER" id="PTHR33910">
    <property type="entry name" value="PROTEIN TRANSLOCASE SUBUNIT SECE"/>
    <property type="match status" value="1"/>
</dbReference>
<dbReference type="PANTHER" id="PTHR33910:SF1">
    <property type="entry name" value="PROTEIN TRANSLOCASE SUBUNIT SECE"/>
    <property type="match status" value="1"/>
</dbReference>
<dbReference type="Pfam" id="PF00584">
    <property type="entry name" value="SecE"/>
    <property type="match status" value="1"/>
</dbReference>
<dbReference type="PROSITE" id="PS01067">
    <property type="entry name" value="SECE_SEC61G"/>
    <property type="match status" value="1"/>
</dbReference>
<reference key="1">
    <citation type="journal article" date="1992" name="J. Biol. Chem.">
        <title>The organization and expression of essential transcription translation component genes in the extremely thermophilic eubacterium Thermotoga maritima.</title>
        <authorList>
            <person name="Liao D."/>
            <person name="Dennis P.P."/>
        </authorList>
    </citation>
    <scope>NUCLEOTIDE SEQUENCE [GENOMIC DNA]</scope>
    <source>
        <strain>ATCC 43589 / DSM 3109 / JCM 10099 / NBRC 100826 / MSB8</strain>
    </source>
</reference>
<reference key="2">
    <citation type="journal article" date="1999" name="Nature">
        <title>Evidence for lateral gene transfer between Archaea and Bacteria from genome sequence of Thermotoga maritima.</title>
        <authorList>
            <person name="Nelson K.E."/>
            <person name="Clayton R.A."/>
            <person name="Gill S.R."/>
            <person name="Gwinn M.L."/>
            <person name="Dodson R.J."/>
            <person name="Haft D.H."/>
            <person name="Hickey E.K."/>
            <person name="Peterson J.D."/>
            <person name="Nelson W.C."/>
            <person name="Ketchum K.A."/>
            <person name="McDonald L.A."/>
            <person name="Utterback T.R."/>
            <person name="Malek J.A."/>
            <person name="Linher K.D."/>
            <person name="Garrett M.M."/>
            <person name="Stewart A.M."/>
            <person name="Cotton M.D."/>
            <person name="Pratt M.S."/>
            <person name="Phillips C.A."/>
            <person name="Richardson D.L."/>
            <person name="Heidelberg J.F."/>
            <person name="Sutton G.G."/>
            <person name="Fleischmann R.D."/>
            <person name="Eisen J.A."/>
            <person name="White O."/>
            <person name="Salzberg S.L."/>
            <person name="Smith H.O."/>
            <person name="Venter J.C."/>
            <person name="Fraser C.M."/>
        </authorList>
    </citation>
    <scope>NUCLEOTIDE SEQUENCE [LARGE SCALE GENOMIC DNA]</scope>
    <source>
        <strain>ATCC 43589 / DSM 3109 / JCM 10099 / NBRC 100826 / MSB8</strain>
    </source>
</reference>
<reference key="3">
    <citation type="journal article" date="2008" name="Nature">
        <title>Structure of a complex of the ATPase SecA and the protein-translocation channel.</title>
        <authorList>
            <person name="Zimmer J."/>
            <person name="Nam Y."/>
            <person name="Rapoport T.A."/>
        </authorList>
    </citation>
    <scope>X-RAY CRYSTALLOGRAPHY (4.50 ANGSTROMS) OF SECYEG IN COMPLEX WITH SECA</scope>
</reference>
<sequence length="65" mass="7314">MEKLRKFFREVIAEAKKISWPSRKELLTSFGVVLVILAVTSVYFFVLDFIFSGVVSAIFKALGIG</sequence>
<protein>
    <recommendedName>
        <fullName evidence="1">Protein translocase subunit SecE</fullName>
    </recommendedName>
</protein>
<accession>P35874</accession>
<keyword id="KW-0002">3D-structure</keyword>
<keyword id="KW-0997">Cell inner membrane</keyword>
<keyword id="KW-1003">Cell membrane</keyword>
<keyword id="KW-0472">Membrane</keyword>
<keyword id="KW-0653">Protein transport</keyword>
<keyword id="KW-1185">Reference proteome</keyword>
<keyword id="KW-0811">Translocation</keyword>
<keyword id="KW-0812">Transmembrane</keyword>
<keyword id="KW-1133">Transmembrane helix</keyword>
<keyword id="KW-0813">Transport</keyword>
<name>SECE_THEMA</name>
<proteinExistence type="evidence at protein level"/>